<reference key="1">
    <citation type="journal article" date="2000" name="J. Virol.">
        <title>The genome of fowlpox virus.</title>
        <authorList>
            <person name="Afonso C.L."/>
            <person name="Tulman E.R."/>
            <person name="Lu Z."/>
            <person name="Zsak L."/>
            <person name="Kutish G.F."/>
            <person name="Rock D.L."/>
        </authorList>
    </citation>
    <scope>NUCLEOTIDE SEQUENCE [LARGE SCALE GENOMIC DNA]</scope>
</reference>
<name>V245_FOWPN</name>
<organismHost>
    <name type="scientific">Vertebrata</name>
    <dbReference type="NCBI Taxonomy" id="7742"/>
</organismHost>
<keyword id="KW-0040">ANK repeat</keyword>
<keyword id="KW-1185">Reference proteome</keyword>
<keyword id="KW-0677">Repeat</keyword>
<dbReference type="EMBL" id="AF198100">
    <property type="protein sequence ID" value="AAF44589.1"/>
    <property type="molecule type" value="Genomic_DNA"/>
</dbReference>
<dbReference type="RefSeq" id="NP_039208.1">
    <property type="nucleotide sequence ID" value="NC_002188.1"/>
</dbReference>
<dbReference type="SMR" id="Q9J4Z5"/>
<dbReference type="GeneID" id="1486817"/>
<dbReference type="KEGG" id="vg:1486817"/>
<dbReference type="Proteomes" id="UP000008597">
    <property type="component" value="Segment"/>
</dbReference>
<dbReference type="Gene3D" id="1.25.40.20">
    <property type="entry name" value="Ankyrin repeat-containing domain"/>
    <property type="match status" value="3"/>
</dbReference>
<dbReference type="InterPro" id="IPR002110">
    <property type="entry name" value="Ankyrin_rpt"/>
</dbReference>
<dbReference type="InterPro" id="IPR036770">
    <property type="entry name" value="Ankyrin_rpt-contain_sf"/>
</dbReference>
<dbReference type="PANTHER" id="PTHR24126">
    <property type="entry name" value="ANKYRIN REPEAT, PH AND SEC7 DOMAIN CONTAINING PROTEIN SECG-RELATED"/>
    <property type="match status" value="1"/>
</dbReference>
<dbReference type="Pfam" id="PF12796">
    <property type="entry name" value="Ank_2"/>
    <property type="match status" value="3"/>
</dbReference>
<dbReference type="SMART" id="SM00248">
    <property type="entry name" value="ANK"/>
    <property type="match status" value="8"/>
</dbReference>
<dbReference type="SUPFAM" id="SSF48403">
    <property type="entry name" value="Ankyrin repeat"/>
    <property type="match status" value="1"/>
</dbReference>
<dbReference type="PROSITE" id="PS50297">
    <property type="entry name" value="ANK_REP_REGION"/>
    <property type="match status" value="1"/>
</dbReference>
<dbReference type="PROSITE" id="PS50088">
    <property type="entry name" value="ANK_REPEAT"/>
    <property type="match status" value="5"/>
</dbReference>
<sequence length="436" mass="49509">MSVDWRTEIYSGDISLVEKLIKNKGNCINISVEETTTPLIDAIRTGNAKIVELFIKHGAQVNHVNTKIPNPLLTAIKIGSHDIVKLLLINGVDTSILPVPCINKEMIKTILDSGVKVNTKNAKSKTFLHYAIKNNDLEVIKMLFEYGADVNIKDDNGCYPIHIATRSNSYEIIKLLLEKGAYANVKDNYGNSPLHNAAKYGDYACIKLVLDHTNNISNKCNNGVTPLHNAILYNRSAVELLINNRSINDTDVDGYTPLHYALQPPCSIDIIDILLYNNADISIKDNNGRNPIDTAFKYINRDSVIKELLANAVLINEVGKLKDTTILEHKEIKDNTVFSNFVYECNEEIKKMKKTKCVGDYSMFDVYMIRYKHKYDGNKDSIKDYLRCLDDNSTRMLKTIDINEFPIYSMYLVRCLYEYGNILKEMGSCIHNRYKK</sequence>
<proteinExistence type="predicted"/>
<feature type="chain" id="PRO_0000067131" description="Putative ankyrin repeat protein FPV245">
    <location>
        <begin position="1"/>
        <end position="436"/>
    </location>
</feature>
<feature type="repeat" description="ANK 1">
    <location>
        <begin position="1"/>
        <end position="30"/>
    </location>
</feature>
<feature type="repeat" description="ANK 2">
    <location>
        <begin position="34"/>
        <end position="63"/>
    </location>
</feature>
<feature type="repeat" description="ANK 3">
    <location>
        <begin position="67"/>
        <end position="96"/>
    </location>
</feature>
<feature type="repeat" description="ANK 4">
    <location>
        <begin position="98"/>
        <end position="119"/>
    </location>
</feature>
<feature type="repeat" description="ANK 5">
    <location>
        <begin position="123"/>
        <end position="152"/>
    </location>
</feature>
<feature type="repeat" description="ANK 6">
    <location>
        <begin position="156"/>
        <end position="185"/>
    </location>
</feature>
<feature type="repeat" description="ANK 7">
    <location>
        <begin position="189"/>
        <end position="218"/>
    </location>
</feature>
<feature type="repeat" description="ANK 8">
    <location>
        <begin position="222"/>
        <end position="252"/>
    </location>
</feature>
<feature type="repeat" description="ANK 9">
    <location>
        <begin position="253"/>
        <end position="283"/>
    </location>
</feature>
<feature type="repeat" description="ANK 10">
    <location>
        <begin position="287"/>
        <end position="317"/>
    </location>
</feature>
<accession>Q9J4Z5</accession>
<organism>
    <name type="scientific">Fowlpox virus (strain NVSL)</name>
    <name type="common">FPV</name>
    <dbReference type="NCBI Taxonomy" id="928301"/>
    <lineage>
        <taxon>Viruses</taxon>
        <taxon>Varidnaviria</taxon>
        <taxon>Bamfordvirae</taxon>
        <taxon>Nucleocytoviricota</taxon>
        <taxon>Pokkesviricetes</taxon>
        <taxon>Chitovirales</taxon>
        <taxon>Poxviridae</taxon>
        <taxon>Chordopoxvirinae</taxon>
        <taxon>Avipoxvirus</taxon>
        <taxon>Fowlpox virus</taxon>
    </lineage>
</organism>
<protein>
    <recommendedName>
        <fullName>Putative ankyrin repeat protein FPV245</fullName>
    </recommendedName>
</protein>
<gene>
    <name type="ordered locus">FPV245</name>
</gene>